<gene>
    <name type="primary">Kibra</name>
    <name type="ORF">GJ10664</name>
</gene>
<proteinExistence type="inferred from homology"/>
<feature type="chain" id="PRO_0000392974" description="Protein kibra">
    <location>
        <begin position="1"/>
        <end position="1276"/>
    </location>
</feature>
<feature type="domain" description="WW 1" evidence="4">
    <location>
        <begin position="43"/>
        <end position="76"/>
    </location>
</feature>
<feature type="domain" description="WW 2" evidence="4">
    <location>
        <begin position="90"/>
        <end position="123"/>
    </location>
</feature>
<feature type="domain" description="C2" evidence="3">
    <location>
        <begin position="697"/>
        <end position="817"/>
    </location>
</feature>
<feature type="region of interest" description="Disordered" evidence="5">
    <location>
        <begin position="1"/>
        <end position="47"/>
    </location>
</feature>
<feature type="region of interest" description="Disordered" evidence="5">
    <location>
        <begin position="521"/>
        <end position="554"/>
    </location>
</feature>
<feature type="region of interest" description="Disordered" evidence="5">
    <location>
        <begin position="847"/>
        <end position="882"/>
    </location>
</feature>
<feature type="region of interest" description="Disordered" evidence="5">
    <location>
        <begin position="898"/>
        <end position="921"/>
    </location>
</feature>
<feature type="region of interest" description="Disordered" evidence="5">
    <location>
        <begin position="950"/>
        <end position="980"/>
    </location>
</feature>
<feature type="coiled-coil region" evidence="2">
    <location>
        <begin position="137"/>
        <end position="219"/>
    </location>
</feature>
<feature type="coiled-coil region" evidence="2">
    <location>
        <begin position="266"/>
        <end position="298"/>
    </location>
</feature>
<feature type="coiled-coil region" evidence="2">
    <location>
        <begin position="327"/>
        <end position="455"/>
    </location>
</feature>
<feature type="compositionally biased region" description="Low complexity" evidence="5">
    <location>
        <begin position="1"/>
        <end position="16"/>
    </location>
</feature>
<feature type="compositionally biased region" description="Basic residues" evidence="5">
    <location>
        <begin position="18"/>
        <end position="34"/>
    </location>
</feature>
<feature type="compositionally biased region" description="Low complexity" evidence="5">
    <location>
        <begin position="524"/>
        <end position="546"/>
    </location>
</feature>
<feature type="compositionally biased region" description="Low complexity" evidence="5">
    <location>
        <begin position="847"/>
        <end position="858"/>
    </location>
</feature>
<feature type="compositionally biased region" description="Low complexity" evidence="5">
    <location>
        <begin position="866"/>
        <end position="878"/>
    </location>
</feature>
<feature type="compositionally biased region" description="Acidic residues" evidence="5">
    <location>
        <begin position="906"/>
        <end position="920"/>
    </location>
</feature>
<name>KIBRA_DROVI</name>
<comment type="function">
    <text evidence="1">Regulator of the Hippo/SWH (Sav/Wts/Hpo) signaling pathway, a signaling pathway that plays a pivotal role in organ size control and tumor suppression by restricting proliferation and promoting apoptosis. The core of this pathway is composed of a kinase cascade wherein Hippo (Hpo), in complex with its regulatory protein Salvador (Sav), phosphorylates and activates Warts (Wts) in complex with its regulatory protein Mats, which in turn phosphorylates and inactivates the Yorkie (Yki) oncoprotein. Kibra acts synergistically along with Ex and Mer to regulate the Hippo signaling pathway (By similarity).</text>
</comment>
<comment type="subunit">
    <text evidence="1">Forms a complex with Mer and Ex. Interacts (via domain WW 1) with Ex (via RXPPXY motif). Interacts with Mer, Sav, Hpo and Wts (By similarity).</text>
</comment>
<comment type="subcellular location">
    <subcellularLocation>
        <location evidence="1">Cytoplasm</location>
    </subcellularLocation>
    <subcellularLocation>
        <location evidence="1">Apical cell membrane</location>
    </subcellularLocation>
    <text evidence="1">Localizes at the apical cortex of epithelial cells and cytoplasmic, punctate.</text>
</comment>
<comment type="similarity">
    <text evidence="6">Belongs to the WWC family. KIBRA subfamily.</text>
</comment>
<sequence length="1276" mass="143315">MSNQQQQQQQQQQPRQHPQPHPHHHHHHLHHHHQQQPGQHSEFPLPEGWDIARDFDGKTYYIDHINKKTTWLDPRDRYTKPQSFEDCVGDELPVGWEEAYDSNIGRYYINHIAQSTQLEDPRQEWKSVQEQMLSDYLSAAQDQLENKREMYDVKQQRLNLAQEEYNHLNKLAASRSSLCSSSSSMSRHDPELLRADLMLARERVRQLKQELTHITNDISYTERGMNTLYSVGEKINARKNGCYDIAEVQAIREEMLKVHKSLVSGEKVREELMRSLVQIKNELSRQQINEENAELMSAASPFDRVCVASQTDLCGAGEHLNGGARFAEMAKTKLQYAEWRKHIKKLQQQLADHVERIEPGQLESDKDRILLIQEKEKLLNDLNSISLKSRSAEEKQVIQQTRHKLEEDLKEAYEATNTCIANRLRFHEEKQLLLDKLQEALKSTKLLEERLKSFSSESTFSISSGSSLGSLSTASSKSALSFTDIYIDPFAVGESPIDVVDLQRRSQRLFQQHQRLPPVHPALQQQQQTQPLASSEVSLSPRSSLSMETPPASPMKYNAVADQPQAQAKLKEEPTYANALPALPTIPAPPAYAAPPAIPLALAAVRAHPYDLDSTVLDCMMLEAKLQKLNLGSPLNLNGPLSPISEKPSLLDLPQEMLSRSSSTSNTRSVSAAVSNESVAGDSGVFEASRAHLPRKELAQVQIGLKYLKQEGVLVVSLERANNLSALWTATTDNSQVYLRAALLPNSLTSIRTKALSDFQKPVFNDTFAVPISLDKLLTKSLQVTVVSMTGQKEEIIGTVQISMAEFNPEDSTLKWYNVLSSKFIPSFESLDLPSTSAAAAAAAVAASNSNNNNSNTNNREESSDESTITSSQTSTLTRNQAPPLELQAQIAEELPEHVRHNEQQCSDDDDDDDEEEDEQQLVGTLGLTHSGCMLDAYLENMKQEYADKETNTDCAFPPEKLRSQSQLLDDRPVKRSQTFTPSAAVSKNRYNCRLNRSDSDSAMHFGVTPHTFHRGAVERRSLRFQPKATKSVTKLHHNHIPRTSLDLELDLQAQHSKLFFLNDQISKLQNLKEVLQKACDNKDPLIAAWAIENEEFQRLVARADPAKFPEERLLQKLLMKTTKEIHKLRKTKVPKGAPDLVSFKEKISFFTRKGMSVPELPIEFMHPDADAIEEEEEDDNDDEEDNVVETAIAINTALVASSNRNKNLSEHHHRSTDGALSKLAATLTPAINPAPVSAPIPVAVSVPVAAPLADEAKPEQQRYDYVVDRNYGVEV</sequence>
<protein>
    <recommendedName>
        <fullName>Protein kibra</fullName>
    </recommendedName>
</protein>
<dbReference type="EMBL" id="CH940652">
    <property type="protein sequence ID" value="EDW59050.1"/>
    <property type="molecule type" value="Genomic_DNA"/>
</dbReference>
<dbReference type="RefSeq" id="XP_002055938.1">
    <property type="nucleotide sequence ID" value="XM_002055902.2"/>
</dbReference>
<dbReference type="SMR" id="B4M5X4"/>
<dbReference type="FunCoup" id="B4M5X4">
    <property type="interactions" value="298"/>
</dbReference>
<dbReference type="STRING" id="7244.B4M5X4"/>
<dbReference type="EnsemblMetazoa" id="FBtr0226589">
    <property type="protein sequence ID" value="FBpp0225081"/>
    <property type="gene ID" value="FBgn0197942"/>
</dbReference>
<dbReference type="EnsemblMetazoa" id="XM_002055902.3">
    <property type="protein sequence ID" value="XP_002055938.1"/>
    <property type="gene ID" value="LOC6633021"/>
</dbReference>
<dbReference type="GeneID" id="6633021"/>
<dbReference type="KEGG" id="dvi:6633021"/>
<dbReference type="CTD" id="41783"/>
<dbReference type="eggNOG" id="KOG0940">
    <property type="taxonomic scope" value="Eukaryota"/>
</dbReference>
<dbReference type="eggNOG" id="KOG3209">
    <property type="taxonomic scope" value="Eukaryota"/>
</dbReference>
<dbReference type="HOGENOM" id="CLU_005420_1_0_1"/>
<dbReference type="InParanoid" id="B4M5X4"/>
<dbReference type="OMA" id="QVTVVSM"/>
<dbReference type="OrthoDB" id="2020426at2759"/>
<dbReference type="PhylomeDB" id="B4M5X4"/>
<dbReference type="ChiTaRS" id="kibra">
    <property type="organism name" value="fly"/>
</dbReference>
<dbReference type="Proteomes" id="UP000008792">
    <property type="component" value="Unassembled WGS sequence"/>
</dbReference>
<dbReference type="GO" id="GO:0016324">
    <property type="term" value="C:apical plasma membrane"/>
    <property type="evidence" value="ECO:0007669"/>
    <property type="project" value="UniProtKB-SubCell"/>
</dbReference>
<dbReference type="GO" id="GO:0005737">
    <property type="term" value="C:cytoplasm"/>
    <property type="evidence" value="ECO:0007669"/>
    <property type="project" value="UniProtKB-SubCell"/>
</dbReference>
<dbReference type="GO" id="GO:0019900">
    <property type="term" value="F:kinase binding"/>
    <property type="evidence" value="ECO:0007669"/>
    <property type="project" value="TreeGrafter"/>
</dbReference>
<dbReference type="GO" id="GO:0060090">
    <property type="term" value="F:molecular adaptor activity"/>
    <property type="evidence" value="ECO:0007669"/>
    <property type="project" value="TreeGrafter"/>
</dbReference>
<dbReference type="GO" id="GO:0016477">
    <property type="term" value="P:cell migration"/>
    <property type="evidence" value="ECO:0007669"/>
    <property type="project" value="TreeGrafter"/>
</dbReference>
<dbReference type="GO" id="GO:0046621">
    <property type="term" value="P:negative regulation of organ growth"/>
    <property type="evidence" value="ECO:0007669"/>
    <property type="project" value="TreeGrafter"/>
</dbReference>
<dbReference type="GO" id="GO:0035332">
    <property type="term" value="P:positive regulation of hippo signaling"/>
    <property type="evidence" value="ECO:0000250"/>
    <property type="project" value="UniProtKB"/>
</dbReference>
<dbReference type="GO" id="GO:0006355">
    <property type="term" value="P:regulation of DNA-templated transcription"/>
    <property type="evidence" value="ECO:0007669"/>
    <property type="project" value="TreeGrafter"/>
</dbReference>
<dbReference type="CDD" id="cd08680">
    <property type="entry name" value="C2_Kibra"/>
    <property type="match status" value="1"/>
</dbReference>
<dbReference type="CDD" id="cd00201">
    <property type="entry name" value="WW"/>
    <property type="match status" value="2"/>
</dbReference>
<dbReference type="FunFam" id="2.60.40.150:FF:000228">
    <property type="entry name" value="Blast:Protein kibra"/>
    <property type="match status" value="1"/>
</dbReference>
<dbReference type="FunFam" id="2.20.70.10:FF:000041">
    <property type="entry name" value="WW and C2 domain containing 1"/>
    <property type="match status" value="1"/>
</dbReference>
<dbReference type="Gene3D" id="2.20.70.10">
    <property type="match status" value="2"/>
</dbReference>
<dbReference type="Gene3D" id="2.60.40.150">
    <property type="entry name" value="C2 domain"/>
    <property type="match status" value="1"/>
</dbReference>
<dbReference type="InterPro" id="IPR000008">
    <property type="entry name" value="C2_dom"/>
</dbReference>
<dbReference type="InterPro" id="IPR035892">
    <property type="entry name" value="C2_domain_sf"/>
</dbReference>
<dbReference type="InterPro" id="IPR037771">
    <property type="entry name" value="C2_WWC"/>
</dbReference>
<dbReference type="InterPro" id="IPR001202">
    <property type="entry name" value="WW_dom"/>
</dbReference>
<dbReference type="InterPro" id="IPR036020">
    <property type="entry name" value="WW_dom_sf"/>
</dbReference>
<dbReference type="InterPro" id="IPR051105">
    <property type="entry name" value="WWC/KIBRA_Hippo_Reg"/>
</dbReference>
<dbReference type="PANTHER" id="PTHR14791">
    <property type="entry name" value="BOMB/KIRA PROTEINS"/>
    <property type="match status" value="1"/>
</dbReference>
<dbReference type="PANTHER" id="PTHR14791:SF29">
    <property type="entry name" value="PROTEIN KIBRA"/>
    <property type="match status" value="1"/>
</dbReference>
<dbReference type="Pfam" id="PF00168">
    <property type="entry name" value="C2"/>
    <property type="match status" value="1"/>
</dbReference>
<dbReference type="Pfam" id="PF00397">
    <property type="entry name" value="WW"/>
    <property type="match status" value="2"/>
</dbReference>
<dbReference type="SMART" id="SM00239">
    <property type="entry name" value="C2"/>
    <property type="match status" value="1"/>
</dbReference>
<dbReference type="SMART" id="SM00456">
    <property type="entry name" value="WW"/>
    <property type="match status" value="2"/>
</dbReference>
<dbReference type="SUPFAM" id="SSF49562">
    <property type="entry name" value="C2 domain (Calcium/lipid-binding domain, CaLB)"/>
    <property type="match status" value="1"/>
</dbReference>
<dbReference type="SUPFAM" id="SSF51045">
    <property type="entry name" value="WW domain"/>
    <property type="match status" value="2"/>
</dbReference>
<dbReference type="PROSITE" id="PS50004">
    <property type="entry name" value="C2"/>
    <property type="match status" value="1"/>
</dbReference>
<dbReference type="PROSITE" id="PS01159">
    <property type="entry name" value="WW_DOMAIN_1"/>
    <property type="match status" value="1"/>
</dbReference>
<dbReference type="PROSITE" id="PS50020">
    <property type="entry name" value="WW_DOMAIN_2"/>
    <property type="match status" value="2"/>
</dbReference>
<keyword id="KW-1003">Cell membrane</keyword>
<keyword id="KW-0175">Coiled coil</keyword>
<keyword id="KW-0963">Cytoplasm</keyword>
<keyword id="KW-0472">Membrane</keyword>
<keyword id="KW-0597">Phosphoprotein</keyword>
<keyword id="KW-1185">Reference proteome</keyword>
<keyword id="KW-0677">Repeat</keyword>
<keyword id="KW-0804">Transcription</keyword>
<keyword id="KW-0805">Transcription regulation</keyword>
<reference key="1">
    <citation type="journal article" date="2007" name="Nature">
        <title>Evolution of genes and genomes on the Drosophila phylogeny.</title>
        <authorList>
            <consortium name="Drosophila 12 genomes consortium"/>
        </authorList>
    </citation>
    <scope>NUCLEOTIDE SEQUENCE [LARGE SCALE GENOMIC DNA]</scope>
    <source>
        <strain>Tucson 15010-1051.87</strain>
    </source>
</reference>
<organism>
    <name type="scientific">Drosophila virilis</name>
    <name type="common">Fruit fly</name>
    <dbReference type="NCBI Taxonomy" id="7244"/>
    <lineage>
        <taxon>Eukaryota</taxon>
        <taxon>Metazoa</taxon>
        <taxon>Ecdysozoa</taxon>
        <taxon>Arthropoda</taxon>
        <taxon>Hexapoda</taxon>
        <taxon>Insecta</taxon>
        <taxon>Pterygota</taxon>
        <taxon>Neoptera</taxon>
        <taxon>Endopterygota</taxon>
        <taxon>Diptera</taxon>
        <taxon>Brachycera</taxon>
        <taxon>Muscomorpha</taxon>
        <taxon>Ephydroidea</taxon>
        <taxon>Drosophilidae</taxon>
        <taxon>Drosophila</taxon>
    </lineage>
</organism>
<evidence type="ECO:0000250" key="1"/>
<evidence type="ECO:0000255" key="2"/>
<evidence type="ECO:0000255" key="3">
    <source>
        <dbReference type="PROSITE-ProRule" id="PRU00041"/>
    </source>
</evidence>
<evidence type="ECO:0000255" key="4">
    <source>
        <dbReference type="PROSITE-ProRule" id="PRU00224"/>
    </source>
</evidence>
<evidence type="ECO:0000256" key="5">
    <source>
        <dbReference type="SAM" id="MobiDB-lite"/>
    </source>
</evidence>
<evidence type="ECO:0000305" key="6"/>
<accession>B4M5X4</accession>